<organism>
    <name type="scientific">Arabidopsis thaliana</name>
    <name type="common">Mouse-ear cress</name>
    <dbReference type="NCBI Taxonomy" id="3702"/>
    <lineage>
        <taxon>Eukaryota</taxon>
        <taxon>Viridiplantae</taxon>
        <taxon>Streptophyta</taxon>
        <taxon>Embryophyta</taxon>
        <taxon>Tracheophyta</taxon>
        <taxon>Spermatophyta</taxon>
        <taxon>Magnoliopsida</taxon>
        <taxon>eudicotyledons</taxon>
        <taxon>Gunneridae</taxon>
        <taxon>Pentapetalae</taxon>
        <taxon>rosids</taxon>
        <taxon>malvids</taxon>
        <taxon>Brassicales</taxon>
        <taxon>Brassicaceae</taxon>
        <taxon>Camelineae</taxon>
        <taxon>Arabidopsis</taxon>
    </lineage>
</organism>
<comment type="function">
    <text evidence="3">Central component of the receptor complex responsible for the recognition and translocation of cytosolically synthesized mitochondrial preproteins. Together with TOM22 functions as the transit peptide receptor at the surface of the mitochondrion outer membrane and facilitates the movement of preproteins into the translocation pore.</text>
</comment>
<comment type="subunit">
    <text evidence="1 3 4">Forms part of the preprotein translocase complex of the outer mitochondrial membrane (TOM complex) which consists of at least 6 different proteins (TOM5, TOM6, TOM7, TOM20, TOM22/TOM9 and TOM40) (PubMed:17981999, Ref.4). Component of a mitochondrial large protein complex that contains, at least, MIC60, DGS1, TOM40, TOM20 proteins, and petC/RISP (By similarity).</text>
</comment>
<comment type="subcellular location">
    <subcellularLocation>
        <location evidence="6">Mitochondrion outer membrane</location>
        <topology evidence="6">Single-pass membrane protein</topology>
    </subcellularLocation>
</comment>
<comment type="alternative products">
    <event type="alternative splicing"/>
    <isoform>
        <id>P82872-1</id>
        <name>1</name>
        <sequence type="displayed"/>
    </isoform>
    <text>A number of isoforms are produced. According to EST sequences.</text>
</comment>
<comment type="tissue specificity">
    <text evidence="3">Barely detected in roots.</text>
</comment>
<comment type="disruption phenotype">
    <text evidence="3">No visible phenotype.</text>
</comment>
<comment type="miscellaneous">
    <text>There are four genes (TOM20-1, TOM20-2, TOM20-3 and TOM20-4) which encode mitochondrial import receptor subunits TOM20, but TOM20-1 is the only one that has not been directly identified in isolated mitochondria from cv. Columbia.</text>
</comment>
<comment type="miscellaneous">
    <text>In mammals and fungi, the transmembrane domain is located at the N-terminus while it is located at the C-terminus in plants. The overall orientation of the protein in the membrane is therefore inverted.</text>
</comment>
<comment type="similarity">
    <text evidence="6">Belongs to the Tom20 family.</text>
</comment>
<proteinExistence type="evidence at protein level"/>
<reference key="1">
    <citation type="journal article" date="2001" name="Plant Physiol.">
        <title>Purification and characterization of the preprotein translocase of the outer mitochondrial membrane from Arabidopsis. Identification of multiple forms of TOM20.</title>
        <authorList>
            <person name="Werhahn W."/>
            <person name="Niemeyer A."/>
            <person name="Jaensch L."/>
            <person name="Kruft V."/>
            <person name="Schmitz U.K."/>
            <person name="Braun H.-P."/>
        </authorList>
    </citation>
    <scope>NUCLEOTIDE SEQUENCE [MRNA]</scope>
    <source>
        <strain>cv. Columbia</strain>
    </source>
</reference>
<reference key="2">
    <citation type="journal article" date="2000" name="DNA Res.">
        <title>Structural analysis of Arabidopsis thaliana chromosome 3. I. Sequence features of the regions of 4,504,864 bp covered by sixty P1 and TAC clones.</title>
        <authorList>
            <person name="Sato S."/>
            <person name="Nakamura Y."/>
            <person name="Kaneko T."/>
            <person name="Katoh T."/>
            <person name="Asamizu E."/>
            <person name="Tabata S."/>
        </authorList>
    </citation>
    <scope>NUCLEOTIDE SEQUENCE [LARGE SCALE GENOMIC DNA]</scope>
    <source>
        <strain>cv. Columbia</strain>
    </source>
</reference>
<reference key="3">
    <citation type="journal article" date="2017" name="Plant J.">
        <title>Araport11: a complete reannotation of the Arabidopsis thaliana reference genome.</title>
        <authorList>
            <person name="Cheng C.Y."/>
            <person name="Krishnakumar V."/>
            <person name="Chan A.P."/>
            <person name="Thibaud-Nissen F."/>
            <person name="Schobel S."/>
            <person name="Town C.D."/>
        </authorList>
    </citation>
    <scope>GENOME REANNOTATION</scope>
    <source>
        <strain>cv. Columbia</strain>
    </source>
</reference>
<reference key="4">
    <citation type="journal article" date="2003" name="Plant Physiol. Biochem.">
        <title>Identification of novel subunits of the TOM complex from Arabidopsis thaliana.</title>
        <authorList>
            <person name="Werhahn W."/>
            <person name="Jaensch L."/>
            <person name="Braun H.-P."/>
        </authorList>
    </citation>
    <scope>SUBUNIT</scope>
</reference>
<reference key="5">
    <citation type="journal article" date="2007" name="Plant Cell">
        <title>Functional definition of outer membrane proteins involved in preprotein import into mitochondria.</title>
        <authorList>
            <person name="Lister R."/>
            <person name="Carrie C."/>
            <person name="Duncan O."/>
            <person name="Ho L.H."/>
            <person name="Howell K.A."/>
            <person name="Murcha M.W."/>
            <person name="Whelan J."/>
        </authorList>
    </citation>
    <scope>FUNCTION</scope>
    <scope>DISRUPTION PHENOTYPE</scope>
    <scope>SUBUNIT</scope>
    <scope>TISSUE SPECIFICITY</scope>
</reference>
<name>TO201_ARATH</name>
<dbReference type="EMBL" id="AJ296023">
    <property type="protein sequence ID" value="CAC17150.1"/>
    <property type="molecule type" value="mRNA"/>
</dbReference>
<dbReference type="EMBL" id="AB026649">
    <property type="protein sequence ID" value="BAB01088.1"/>
    <property type="molecule type" value="Genomic_DNA"/>
</dbReference>
<dbReference type="EMBL" id="CP002686">
    <property type="protein sequence ID" value="AEE77262.1"/>
    <property type="molecule type" value="Genomic_DNA"/>
</dbReference>
<dbReference type="RefSeq" id="NP_189343.1">
    <molecule id="P82872-1"/>
    <property type="nucleotide sequence ID" value="NM_113621.3"/>
</dbReference>
<dbReference type="SMR" id="P82872"/>
<dbReference type="STRING" id="3702.P82872"/>
<dbReference type="ProteomicsDB" id="232404">
    <molecule id="P82872-1"/>
</dbReference>
<dbReference type="EnsemblPlants" id="AT3G27070.1">
    <molecule id="P82872-1"/>
    <property type="protein sequence ID" value="AT3G27070.1"/>
    <property type="gene ID" value="AT3G27070"/>
</dbReference>
<dbReference type="GeneID" id="822325"/>
<dbReference type="Gramene" id="AT3G27070.1">
    <molecule id="P82872-1"/>
    <property type="protein sequence ID" value="AT3G27070.1"/>
    <property type="gene ID" value="AT3G27070"/>
</dbReference>
<dbReference type="KEGG" id="ath:AT3G27070"/>
<dbReference type="Araport" id="AT3G27070"/>
<dbReference type="TAIR" id="AT3G27070">
    <property type="gene designation" value="TOM20-1"/>
</dbReference>
<dbReference type="eggNOG" id="ENOG502QT42">
    <property type="taxonomic scope" value="Eukaryota"/>
</dbReference>
<dbReference type="HOGENOM" id="CLU_117357_0_0_1"/>
<dbReference type="InParanoid" id="P82872"/>
<dbReference type="OMA" id="HNEHYLK"/>
<dbReference type="PhylomeDB" id="P82872"/>
<dbReference type="PRO" id="PR:P82872"/>
<dbReference type="Proteomes" id="UP000006548">
    <property type="component" value="Chromosome 3"/>
</dbReference>
<dbReference type="ExpressionAtlas" id="P82872">
    <property type="expression patterns" value="baseline and differential"/>
</dbReference>
<dbReference type="GO" id="GO:0005742">
    <property type="term" value="C:mitochondrial outer membrane translocase complex"/>
    <property type="evidence" value="ECO:0007669"/>
    <property type="project" value="InterPro"/>
</dbReference>
<dbReference type="GO" id="GO:0045040">
    <property type="term" value="P:protein insertion into mitochondrial outer membrane"/>
    <property type="evidence" value="ECO:0007669"/>
    <property type="project" value="InterPro"/>
</dbReference>
<dbReference type="Gene3D" id="1.25.40.10">
    <property type="entry name" value="Tetratricopeptide repeat domain"/>
    <property type="match status" value="1"/>
</dbReference>
<dbReference type="InterPro" id="IPR010547">
    <property type="entry name" value="TOM20_imprt_rcpt"/>
</dbReference>
<dbReference type="InterPro" id="IPR011990">
    <property type="entry name" value="TPR-like_helical_dom_sf"/>
</dbReference>
<dbReference type="PANTHER" id="PTHR32409">
    <property type="entry name" value="MITOCHONDRIAL IMPORT RECEPTOR SUBUNIT TOM20-1-RELATED"/>
    <property type="match status" value="1"/>
</dbReference>
<dbReference type="PANTHER" id="PTHR32409:SF3">
    <property type="entry name" value="MITOCHONDRIAL IMPORT RECEPTOR SUBUNIT TOM20-1-RELATED"/>
    <property type="match status" value="1"/>
</dbReference>
<dbReference type="Pfam" id="PF06552">
    <property type="entry name" value="TOM20_plant"/>
    <property type="match status" value="1"/>
</dbReference>
<dbReference type="SUPFAM" id="SSF48452">
    <property type="entry name" value="TPR-like"/>
    <property type="match status" value="1"/>
</dbReference>
<accession>P82872</accession>
<accession>Q9LSC9</accession>
<sequence length="188" mass="21305">MDKLNFFEEIRKDAEETYKLNPEDADNLMRWGEALLELSQFQNVIDSLKMIQDAISKLEDAILIDPMKHDAVWCLGNAYTSYARLTPDDTQARLNFGLAYLFFGIAVAQQPDNQVYHKSLEMADKAPQLHTGFHKNRLLSLLGGVETLAIPSPKVVKNKKSSDEKYIVMGWVILAIGVVACISFRKLR</sequence>
<gene>
    <name evidence="5" type="primary">TOM20-1</name>
    <name evidence="7" type="ordered locus">At3g27070</name>
    <name evidence="8" type="ORF">MOJ10.14</name>
</gene>
<feature type="chain" id="PRO_0000051543" description="Mitochondrial import receptor subunit TOM20-1">
    <location>
        <begin position="1"/>
        <end position="188"/>
    </location>
</feature>
<feature type="topological domain" description="Cytoplasmic" evidence="2">
    <location>
        <begin position="1"/>
        <end position="164"/>
    </location>
</feature>
<feature type="transmembrane region" description="Helical" evidence="2">
    <location>
        <begin position="165"/>
        <end position="182"/>
    </location>
</feature>
<feature type="topological domain" description="Mitochondrial intermembrane" evidence="2">
    <location>
        <begin position="183"/>
        <end position="188"/>
    </location>
</feature>
<keyword id="KW-0025">Alternative splicing</keyword>
<keyword id="KW-0472">Membrane</keyword>
<keyword id="KW-0496">Mitochondrion</keyword>
<keyword id="KW-1000">Mitochondrion outer membrane</keyword>
<keyword id="KW-0653">Protein transport</keyword>
<keyword id="KW-1185">Reference proteome</keyword>
<keyword id="KW-0812">Transmembrane</keyword>
<keyword id="KW-1133">Transmembrane helix</keyword>
<keyword id="KW-0813">Transport</keyword>
<evidence type="ECO:0000250" key="1">
    <source>
        <dbReference type="UniProtKB" id="P82873"/>
    </source>
</evidence>
<evidence type="ECO:0000255" key="2"/>
<evidence type="ECO:0000269" key="3">
    <source>
    </source>
</evidence>
<evidence type="ECO:0000269" key="4">
    <source ref="4"/>
</evidence>
<evidence type="ECO:0000303" key="5">
    <source>
    </source>
</evidence>
<evidence type="ECO:0000305" key="6"/>
<evidence type="ECO:0000312" key="7">
    <source>
        <dbReference type="Araport" id="AT3G27070"/>
    </source>
</evidence>
<evidence type="ECO:0000312" key="8">
    <source>
        <dbReference type="EMBL" id="BAB01088.1"/>
    </source>
</evidence>
<protein>
    <recommendedName>
        <fullName evidence="5">Mitochondrial import receptor subunit TOM20-1</fullName>
    </recommendedName>
    <alternativeName>
        <fullName evidence="5">Translocase of outer membrane 20 kDa subunit 1</fullName>
    </alternativeName>
</protein>